<keyword id="KW-0963">Cytoplasm</keyword>
<keyword id="KW-0507">mRNA processing</keyword>
<keyword id="KW-0539">Nucleus</keyword>
<keyword id="KW-1185">Reference proteome</keyword>
<keyword id="KW-0677">Repeat</keyword>
<sequence length="997" mass="112359">MASEGTSWGAEDIGAQGDQVQHSEEQVDNYAHDSLASGDADAADNGTEDDGGEYDPESVTIGTPAMVPEPASSGTQRQTSKPKMSGGFIVEASDDEDEDEDEDEDEDEDEQPASAVPQTDAVSTQNHPGPSTTSDEHVPAAPTHAPVPPAVPSNVTPVLPGFGPVDLLEFRVKEDPRGDMDAWQELIASHRDFSPLEKARSTYNRFVEIFPQAADKWVEWIELELKYNNFVEVEQLFGRCLMQVPNVKLWTVYLDYIRRRNDLNNDPSGQARRTVTQSYEFVIDNIGVDRDSGNIWQQYVQFVKNGPGQIDGTDWQDRQKMDQLRGIYRRAVAVPMSTVNNLWKEYDQFEMGLNKMTGRKFIQERSPVYMSAKSANIALDNITRHLDRTNLPRLPPAPGFNGDQEFRDQVEMWKKWIAWEKEDPLVLKSDEPKAYNQRVLHVYKQALMALRFWPEIWVDAAEWCFQNDIRENDKEMGTELLVEGIKANRESVLLALKHADHIEVNYPDKEVDKAEFAQAVRKPYDDVLETLYEMGDKVKEREKLEISTLKQAAAQDPVQTSIEENDDDEDNTPKRSPTEERILAIQKGYAAETQLLSRTISYVWIALARAMRRIQGKGSQAEGGLRKVFTDARQKGRLTSDVYVAVALLESVVYKDPVGAKIFERGARLFPNDEMFMIEYLKYLHSKDDTTNARVVFETCINRLVSNPDTLAKAKLLYAYFHKYESQYGELSQISKLEDRMAELFPEDPKLKSFVDRFSTEKFDPIATPIIISKTAQMRPKQIVPVVQHQHQQSISLRNSPMPVRQEQNPRPQYVRATASPKRPLAVDDEELNPPKRLARGASPLKGAAGRRLDQQRRNQASALHRDITFLLNILPSSQSYDAQRFNSAALVSILRDTEIPDFATLKAAGGGQPRFGNPTHTRQPSGEFVNRPLSPYGRMSAAAGGYRNSPLRPETGNAYQSNPYPPPEASGQQPTWPQAPGGYGAPAPGQFGGYRY</sequence>
<protein>
    <recommendedName>
        <fullName>mRNA 3'-end-processing protein RNA14</fullName>
    </recommendedName>
</protein>
<name>RNA14_GIBZE</name>
<evidence type="ECO:0000250" key="1"/>
<evidence type="ECO:0000256" key="2">
    <source>
        <dbReference type="SAM" id="MobiDB-lite"/>
    </source>
</evidence>
<feature type="chain" id="PRO_0000238525" description="mRNA 3'-end-processing protein RNA14">
    <location>
        <begin position="1"/>
        <end position="997"/>
    </location>
</feature>
<feature type="repeat" description="HAT 1">
    <location>
        <begin position="194"/>
        <end position="226"/>
    </location>
</feature>
<feature type="repeat" description="HAT 2">
    <location>
        <begin position="228"/>
        <end position="259"/>
    </location>
</feature>
<feature type="repeat" description="HAT 3">
    <location>
        <begin position="270"/>
        <end position="305"/>
    </location>
</feature>
<feature type="repeat" description="HAT 4">
    <location>
        <begin position="319"/>
        <end position="352"/>
    </location>
</feature>
<feature type="repeat" description="HAT 5">
    <location>
        <begin position="389"/>
        <end position="422"/>
    </location>
</feature>
<feature type="repeat" description="HAT 6">
    <location>
        <begin position="434"/>
        <end position="466"/>
    </location>
</feature>
<feature type="repeat" description="HAT 7">
    <location>
        <begin position="654"/>
        <end position="686"/>
    </location>
</feature>
<feature type="region of interest" description="Disordered" evidence="2">
    <location>
        <begin position="1"/>
        <end position="152"/>
    </location>
</feature>
<feature type="region of interest" description="Disordered" evidence="2">
    <location>
        <begin position="549"/>
        <end position="579"/>
    </location>
</feature>
<feature type="region of interest" description="Disordered" evidence="2">
    <location>
        <begin position="792"/>
        <end position="854"/>
    </location>
</feature>
<feature type="region of interest" description="Disordered" evidence="2">
    <location>
        <begin position="907"/>
        <end position="997"/>
    </location>
</feature>
<feature type="compositionally biased region" description="Low complexity" evidence="2">
    <location>
        <begin position="32"/>
        <end position="44"/>
    </location>
</feature>
<feature type="compositionally biased region" description="Acidic residues" evidence="2">
    <location>
        <begin position="46"/>
        <end position="56"/>
    </location>
</feature>
<feature type="compositionally biased region" description="Polar residues" evidence="2">
    <location>
        <begin position="72"/>
        <end position="82"/>
    </location>
</feature>
<feature type="compositionally biased region" description="Acidic residues" evidence="2">
    <location>
        <begin position="92"/>
        <end position="111"/>
    </location>
</feature>
<feature type="compositionally biased region" description="Polar residues" evidence="2">
    <location>
        <begin position="116"/>
        <end position="133"/>
    </location>
</feature>
<gene>
    <name type="primary">RNA14</name>
    <name type="ORF">FGRRES_00349</name>
    <name type="ORF">FGSG_00349</name>
</gene>
<organism>
    <name type="scientific">Gibberella zeae (strain ATCC MYA-4620 / CBS 123657 / FGSC 9075 / NRRL 31084 / PH-1)</name>
    <name type="common">Wheat head blight fungus</name>
    <name type="synonym">Fusarium graminearum</name>
    <dbReference type="NCBI Taxonomy" id="229533"/>
    <lineage>
        <taxon>Eukaryota</taxon>
        <taxon>Fungi</taxon>
        <taxon>Dikarya</taxon>
        <taxon>Ascomycota</taxon>
        <taxon>Pezizomycotina</taxon>
        <taxon>Sordariomycetes</taxon>
        <taxon>Hypocreomycetidae</taxon>
        <taxon>Hypocreales</taxon>
        <taxon>Nectriaceae</taxon>
        <taxon>Fusarium</taxon>
    </lineage>
</organism>
<reference key="1">
    <citation type="journal article" date="2007" name="Science">
        <title>The Fusarium graminearum genome reveals a link between localized polymorphism and pathogen specialization.</title>
        <authorList>
            <person name="Cuomo C.A."/>
            <person name="Gueldener U."/>
            <person name="Xu J.-R."/>
            <person name="Trail F."/>
            <person name="Turgeon B.G."/>
            <person name="Di Pietro A."/>
            <person name="Walton J.D."/>
            <person name="Ma L.-J."/>
            <person name="Baker S.E."/>
            <person name="Rep M."/>
            <person name="Adam G."/>
            <person name="Antoniw J."/>
            <person name="Baldwin T."/>
            <person name="Calvo S.E."/>
            <person name="Chang Y.-L."/>
            <person name="DeCaprio D."/>
            <person name="Gale L.R."/>
            <person name="Gnerre S."/>
            <person name="Goswami R.S."/>
            <person name="Hammond-Kosack K."/>
            <person name="Harris L.J."/>
            <person name="Hilburn K."/>
            <person name="Kennell J.C."/>
            <person name="Kroken S."/>
            <person name="Magnuson J.K."/>
            <person name="Mannhaupt G."/>
            <person name="Mauceli E.W."/>
            <person name="Mewes H.-W."/>
            <person name="Mitterbauer R."/>
            <person name="Muehlbauer G."/>
            <person name="Muensterkoetter M."/>
            <person name="Nelson D."/>
            <person name="O'Donnell K."/>
            <person name="Ouellet T."/>
            <person name="Qi W."/>
            <person name="Quesneville H."/>
            <person name="Roncero M.I.G."/>
            <person name="Seong K.-Y."/>
            <person name="Tetko I.V."/>
            <person name="Urban M."/>
            <person name="Waalwijk C."/>
            <person name="Ward T.J."/>
            <person name="Yao J."/>
            <person name="Birren B.W."/>
            <person name="Kistler H.C."/>
        </authorList>
    </citation>
    <scope>NUCLEOTIDE SEQUENCE [LARGE SCALE GENOMIC DNA]</scope>
    <source>
        <strain>ATCC MYA-4620 / CBS 123657 / FGSC 9075 / NRRL 31084 / PH-1</strain>
    </source>
</reference>
<reference key="2">
    <citation type="journal article" date="2010" name="Nature">
        <title>Comparative genomics reveals mobile pathogenicity chromosomes in Fusarium.</title>
        <authorList>
            <person name="Ma L.-J."/>
            <person name="van der Does H.C."/>
            <person name="Borkovich K.A."/>
            <person name="Coleman J.J."/>
            <person name="Daboussi M.-J."/>
            <person name="Di Pietro A."/>
            <person name="Dufresne M."/>
            <person name="Freitag M."/>
            <person name="Grabherr M."/>
            <person name="Henrissat B."/>
            <person name="Houterman P.M."/>
            <person name="Kang S."/>
            <person name="Shim W.-B."/>
            <person name="Woloshuk C."/>
            <person name="Xie X."/>
            <person name="Xu J.-R."/>
            <person name="Antoniw J."/>
            <person name="Baker S.E."/>
            <person name="Bluhm B.H."/>
            <person name="Breakspear A."/>
            <person name="Brown D.W."/>
            <person name="Butchko R.A.E."/>
            <person name="Chapman S."/>
            <person name="Coulson R."/>
            <person name="Coutinho P.M."/>
            <person name="Danchin E.G.J."/>
            <person name="Diener A."/>
            <person name="Gale L.R."/>
            <person name="Gardiner D.M."/>
            <person name="Goff S."/>
            <person name="Hammond-Kosack K.E."/>
            <person name="Hilburn K."/>
            <person name="Hua-Van A."/>
            <person name="Jonkers W."/>
            <person name="Kazan K."/>
            <person name="Kodira C.D."/>
            <person name="Koehrsen M."/>
            <person name="Kumar L."/>
            <person name="Lee Y.-H."/>
            <person name="Li L."/>
            <person name="Manners J.M."/>
            <person name="Miranda-Saavedra D."/>
            <person name="Mukherjee M."/>
            <person name="Park G."/>
            <person name="Park J."/>
            <person name="Park S.-Y."/>
            <person name="Proctor R.H."/>
            <person name="Regev A."/>
            <person name="Ruiz-Roldan M.C."/>
            <person name="Sain D."/>
            <person name="Sakthikumar S."/>
            <person name="Sykes S."/>
            <person name="Schwartz D.C."/>
            <person name="Turgeon B.G."/>
            <person name="Wapinski I."/>
            <person name="Yoder O."/>
            <person name="Young S."/>
            <person name="Zeng Q."/>
            <person name="Zhou S."/>
            <person name="Galagan J."/>
            <person name="Cuomo C.A."/>
            <person name="Kistler H.C."/>
            <person name="Rep M."/>
        </authorList>
    </citation>
    <scope>GENOME REANNOTATION</scope>
    <source>
        <strain>ATCC MYA-4620 / CBS 123657 / FGSC 9075 / NRRL 31084 / PH-1</strain>
    </source>
</reference>
<reference key="3">
    <citation type="journal article" date="2015" name="BMC Genomics">
        <title>The completed genome sequence of the pathogenic ascomycete fungus Fusarium graminearum.</title>
        <authorList>
            <person name="King R."/>
            <person name="Urban M."/>
            <person name="Hammond-Kosack M.C.U."/>
            <person name="Hassani-Pak K."/>
            <person name="Hammond-Kosack K.E."/>
        </authorList>
    </citation>
    <scope>NUCLEOTIDE SEQUENCE [LARGE SCALE GENOMIC DNA]</scope>
    <source>
        <strain>ATCC MYA-4620 / CBS 123657 / FGSC 9075 / NRRL 31084 / PH-1</strain>
    </source>
</reference>
<accession>Q4IR09</accession>
<accession>A0A098D1E1</accession>
<accession>A0A0E0RLZ0</accession>
<accession>V6QTG7</accession>
<proteinExistence type="inferred from homology"/>
<comment type="function">
    <text evidence="1">Component of the cleavage factor IA (CFIA) complex, which is involved in the endonucleolytic cleavage during polyadenylation-dependent pre-mRNA 3'-end formation.</text>
</comment>
<comment type="subcellular location">
    <subcellularLocation>
        <location evidence="1">Nucleus</location>
    </subcellularLocation>
    <subcellularLocation>
        <location evidence="1">Cytoplasm</location>
    </subcellularLocation>
    <text evidence="1">Nucleus and/or cytoplasm.</text>
</comment>
<dbReference type="EMBL" id="DS231663">
    <property type="protein sequence ID" value="ESU05521.1"/>
    <property type="molecule type" value="Genomic_DNA"/>
</dbReference>
<dbReference type="EMBL" id="HG970332">
    <property type="protein sequence ID" value="CEF72265.1"/>
    <property type="molecule type" value="Genomic_DNA"/>
</dbReference>
<dbReference type="RefSeq" id="XP_011316006.1">
    <property type="nucleotide sequence ID" value="XM_011317704.1"/>
</dbReference>
<dbReference type="SMR" id="Q4IR09"/>
<dbReference type="FunCoup" id="Q4IR09">
    <property type="interactions" value="1209"/>
</dbReference>
<dbReference type="STRING" id="229533.Q4IR09"/>
<dbReference type="GeneID" id="23547840"/>
<dbReference type="KEGG" id="fgr:FGSG_00349"/>
<dbReference type="VEuPathDB" id="FungiDB:FGRAMPH1_01G00925"/>
<dbReference type="eggNOG" id="KOG1914">
    <property type="taxonomic scope" value="Eukaryota"/>
</dbReference>
<dbReference type="HOGENOM" id="CLU_007630_1_1_1"/>
<dbReference type="InParanoid" id="Q4IR09"/>
<dbReference type="OrthoDB" id="72269at110618"/>
<dbReference type="Proteomes" id="UP000070720">
    <property type="component" value="Chromosome 1"/>
</dbReference>
<dbReference type="GO" id="GO:0005737">
    <property type="term" value="C:cytoplasm"/>
    <property type="evidence" value="ECO:0007669"/>
    <property type="project" value="UniProtKB-SubCell"/>
</dbReference>
<dbReference type="GO" id="GO:0005634">
    <property type="term" value="C:nucleus"/>
    <property type="evidence" value="ECO:0007669"/>
    <property type="project" value="UniProtKB-SubCell"/>
</dbReference>
<dbReference type="GO" id="GO:0003729">
    <property type="term" value="F:mRNA binding"/>
    <property type="evidence" value="ECO:0007669"/>
    <property type="project" value="TreeGrafter"/>
</dbReference>
<dbReference type="GO" id="GO:0031124">
    <property type="term" value="P:mRNA 3'-end processing"/>
    <property type="evidence" value="ECO:0007669"/>
    <property type="project" value="InterPro"/>
</dbReference>
<dbReference type="Gene3D" id="1.25.40.1040">
    <property type="match status" value="1"/>
</dbReference>
<dbReference type="InterPro" id="IPR003107">
    <property type="entry name" value="HAT"/>
</dbReference>
<dbReference type="InterPro" id="IPR045243">
    <property type="entry name" value="Rna14-like"/>
</dbReference>
<dbReference type="InterPro" id="IPR008847">
    <property type="entry name" value="Suf"/>
</dbReference>
<dbReference type="InterPro" id="IPR011990">
    <property type="entry name" value="TPR-like_helical_dom_sf"/>
</dbReference>
<dbReference type="PANTHER" id="PTHR19980:SF0">
    <property type="entry name" value="CLEAVAGE STIMULATION FACTOR SUBUNIT 3"/>
    <property type="match status" value="1"/>
</dbReference>
<dbReference type="PANTHER" id="PTHR19980">
    <property type="entry name" value="RNA CLEAVAGE STIMULATION FACTOR"/>
    <property type="match status" value="1"/>
</dbReference>
<dbReference type="Pfam" id="PF05843">
    <property type="entry name" value="Suf"/>
    <property type="match status" value="1"/>
</dbReference>
<dbReference type="SMART" id="SM00386">
    <property type="entry name" value="HAT"/>
    <property type="match status" value="6"/>
</dbReference>
<dbReference type="SUPFAM" id="SSF48452">
    <property type="entry name" value="TPR-like"/>
    <property type="match status" value="2"/>
</dbReference>